<name>F210A_MOUSE</name>
<sequence>MQWNVPRTMSRLALRTFVEAQKARLFDHHWRIKGPLLVHRGEYRVAWTPHLRKQWLHLSAVQCLAKQRNLLDAQPPQLGTLRQERWEQDILSKRVLSSSSTSQETPSEKKEETDPLQDKSISLYQRFKKTFRQYGKVLIPVHLITSGIWFGTFYYATIKGVNVIPFLEVIGLPDSIVDILKNSQSGNALTAYAMFKIATPARYTVTLGGTSFTVKYLRSHGYMSTPPPVKEYLQGRMEETKELITEKMEETKDRLTEKLQETKGKVSFKKKVE</sequence>
<evidence type="ECO:0000250" key="1">
    <source>
        <dbReference type="UniProtKB" id="Q96ND0"/>
    </source>
</evidence>
<evidence type="ECO:0000255" key="2"/>
<evidence type="ECO:0000256" key="3">
    <source>
        <dbReference type="SAM" id="MobiDB-lite"/>
    </source>
</evidence>
<evidence type="ECO:0000269" key="4">
    <source>
    </source>
</evidence>
<evidence type="ECO:0000303" key="5">
    <source>
    </source>
</evidence>
<evidence type="ECO:0000305" key="6"/>
<reference key="1">
    <citation type="journal article" date="2005" name="Science">
        <title>The transcriptional landscape of the mammalian genome.</title>
        <authorList>
            <person name="Carninci P."/>
            <person name="Kasukawa T."/>
            <person name="Katayama S."/>
            <person name="Gough J."/>
            <person name="Frith M.C."/>
            <person name="Maeda N."/>
            <person name="Oyama R."/>
            <person name="Ravasi T."/>
            <person name="Lenhard B."/>
            <person name="Wells C."/>
            <person name="Kodzius R."/>
            <person name="Shimokawa K."/>
            <person name="Bajic V.B."/>
            <person name="Brenner S.E."/>
            <person name="Batalov S."/>
            <person name="Forrest A.R."/>
            <person name="Zavolan M."/>
            <person name="Davis M.J."/>
            <person name="Wilming L.G."/>
            <person name="Aidinis V."/>
            <person name="Allen J.E."/>
            <person name="Ambesi-Impiombato A."/>
            <person name="Apweiler R."/>
            <person name="Aturaliya R.N."/>
            <person name="Bailey T.L."/>
            <person name="Bansal M."/>
            <person name="Baxter L."/>
            <person name="Beisel K.W."/>
            <person name="Bersano T."/>
            <person name="Bono H."/>
            <person name="Chalk A.M."/>
            <person name="Chiu K.P."/>
            <person name="Choudhary V."/>
            <person name="Christoffels A."/>
            <person name="Clutterbuck D.R."/>
            <person name="Crowe M.L."/>
            <person name="Dalla E."/>
            <person name="Dalrymple B.P."/>
            <person name="de Bono B."/>
            <person name="Della Gatta G."/>
            <person name="di Bernardo D."/>
            <person name="Down T."/>
            <person name="Engstrom P."/>
            <person name="Fagiolini M."/>
            <person name="Faulkner G."/>
            <person name="Fletcher C.F."/>
            <person name="Fukushima T."/>
            <person name="Furuno M."/>
            <person name="Futaki S."/>
            <person name="Gariboldi M."/>
            <person name="Georgii-Hemming P."/>
            <person name="Gingeras T.R."/>
            <person name="Gojobori T."/>
            <person name="Green R.E."/>
            <person name="Gustincich S."/>
            <person name="Harbers M."/>
            <person name="Hayashi Y."/>
            <person name="Hensch T.K."/>
            <person name="Hirokawa N."/>
            <person name="Hill D."/>
            <person name="Huminiecki L."/>
            <person name="Iacono M."/>
            <person name="Ikeo K."/>
            <person name="Iwama A."/>
            <person name="Ishikawa T."/>
            <person name="Jakt M."/>
            <person name="Kanapin A."/>
            <person name="Katoh M."/>
            <person name="Kawasawa Y."/>
            <person name="Kelso J."/>
            <person name="Kitamura H."/>
            <person name="Kitano H."/>
            <person name="Kollias G."/>
            <person name="Krishnan S.P."/>
            <person name="Kruger A."/>
            <person name="Kummerfeld S.K."/>
            <person name="Kurochkin I.V."/>
            <person name="Lareau L.F."/>
            <person name="Lazarevic D."/>
            <person name="Lipovich L."/>
            <person name="Liu J."/>
            <person name="Liuni S."/>
            <person name="McWilliam S."/>
            <person name="Madan Babu M."/>
            <person name="Madera M."/>
            <person name="Marchionni L."/>
            <person name="Matsuda H."/>
            <person name="Matsuzawa S."/>
            <person name="Miki H."/>
            <person name="Mignone F."/>
            <person name="Miyake S."/>
            <person name="Morris K."/>
            <person name="Mottagui-Tabar S."/>
            <person name="Mulder N."/>
            <person name="Nakano N."/>
            <person name="Nakauchi H."/>
            <person name="Ng P."/>
            <person name="Nilsson R."/>
            <person name="Nishiguchi S."/>
            <person name="Nishikawa S."/>
            <person name="Nori F."/>
            <person name="Ohara O."/>
            <person name="Okazaki Y."/>
            <person name="Orlando V."/>
            <person name="Pang K.C."/>
            <person name="Pavan W.J."/>
            <person name="Pavesi G."/>
            <person name="Pesole G."/>
            <person name="Petrovsky N."/>
            <person name="Piazza S."/>
            <person name="Reed J."/>
            <person name="Reid J.F."/>
            <person name="Ring B.Z."/>
            <person name="Ringwald M."/>
            <person name="Rost B."/>
            <person name="Ruan Y."/>
            <person name="Salzberg S.L."/>
            <person name="Sandelin A."/>
            <person name="Schneider C."/>
            <person name="Schoenbach C."/>
            <person name="Sekiguchi K."/>
            <person name="Semple C.A."/>
            <person name="Seno S."/>
            <person name="Sessa L."/>
            <person name="Sheng Y."/>
            <person name="Shibata Y."/>
            <person name="Shimada H."/>
            <person name="Shimada K."/>
            <person name="Silva D."/>
            <person name="Sinclair B."/>
            <person name="Sperling S."/>
            <person name="Stupka E."/>
            <person name="Sugiura K."/>
            <person name="Sultana R."/>
            <person name="Takenaka Y."/>
            <person name="Taki K."/>
            <person name="Tammoja K."/>
            <person name="Tan S.L."/>
            <person name="Tang S."/>
            <person name="Taylor M.S."/>
            <person name="Tegner J."/>
            <person name="Teichmann S.A."/>
            <person name="Ueda H.R."/>
            <person name="van Nimwegen E."/>
            <person name="Verardo R."/>
            <person name="Wei C.L."/>
            <person name="Yagi K."/>
            <person name="Yamanishi H."/>
            <person name="Zabarovsky E."/>
            <person name="Zhu S."/>
            <person name="Zimmer A."/>
            <person name="Hide W."/>
            <person name="Bult C."/>
            <person name="Grimmond S.M."/>
            <person name="Teasdale R.D."/>
            <person name="Liu E.T."/>
            <person name="Brusic V."/>
            <person name="Quackenbush J."/>
            <person name="Wahlestedt C."/>
            <person name="Mattick J.S."/>
            <person name="Hume D.A."/>
            <person name="Kai C."/>
            <person name="Sasaki D."/>
            <person name="Tomaru Y."/>
            <person name="Fukuda S."/>
            <person name="Kanamori-Katayama M."/>
            <person name="Suzuki M."/>
            <person name="Aoki J."/>
            <person name="Arakawa T."/>
            <person name="Iida J."/>
            <person name="Imamura K."/>
            <person name="Itoh M."/>
            <person name="Kato T."/>
            <person name="Kawaji H."/>
            <person name="Kawagashira N."/>
            <person name="Kawashima T."/>
            <person name="Kojima M."/>
            <person name="Kondo S."/>
            <person name="Konno H."/>
            <person name="Nakano K."/>
            <person name="Ninomiya N."/>
            <person name="Nishio T."/>
            <person name="Okada M."/>
            <person name="Plessy C."/>
            <person name="Shibata K."/>
            <person name="Shiraki T."/>
            <person name="Suzuki S."/>
            <person name="Tagami M."/>
            <person name="Waki K."/>
            <person name="Watahiki A."/>
            <person name="Okamura-Oho Y."/>
            <person name="Suzuki H."/>
            <person name="Kawai J."/>
            <person name="Hayashizaki Y."/>
        </authorList>
    </citation>
    <scope>NUCLEOTIDE SEQUENCE [LARGE SCALE MRNA]</scope>
    <source>
        <strain>C57BL/6J</strain>
        <tissue>Diencephalon</tissue>
        <tissue>Embryo</tissue>
        <tissue>Retina</tissue>
        <tissue>Testis</tissue>
    </source>
</reference>
<reference key="2">
    <citation type="journal article" date="2004" name="Genome Res.">
        <title>The status, quality, and expansion of the NIH full-length cDNA project: the Mammalian Gene Collection (MGC).</title>
        <authorList>
            <consortium name="The MGC Project Team"/>
        </authorList>
    </citation>
    <scope>NUCLEOTIDE SEQUENCE [LARGE SCALE MRNA]</scope>
    <source>
        <strain>FVB/N</strain>
        <tissue>Mammary gland</tissue>
        <tissue>Mammary tumor</tissue>
    </source>
</reference>
<reference key="3">
    <citation type="journal article" date="2010" name="Cell">
        <title>A tissue-specific atlas of mouse protein phosphorylation and expression.</title>
        <authorList>
            <person name="Huttlin E.L."/>
            <person name="Jedrychowski M.P."/>
            <person name="Elias J.E."/>
            <person name="Goswami T."/>
            <person name="Rad R."/>
            <person name="Beausoleil S.A."/>
            <person name="Villen J."/>
            <person name="Haas W."/>
            <person name="Sowa M.E."/>
            <person name="Gygi S.P."/>
        </authorList>
    </citation>
    <scope>IDENTIFICATION BY MASS SPECTROMETRY [LARGE SCALE ANALYSIS]</scope>
    <source>
        <tissue>Brain</tissue>
        <tissue>Brown adipose tissue</tissue>
        <tissue>Heart</tissue>
        <tissue>Kidney</tissue>
        <tissue>Liver</tissue>
        <tissue>Pancreas</tissue>
    </source>
</reference>
<reference key="4">
    <citation type="journal article" date="2018" name="Proc. Natl. Acad. Sci. U.S.A.">
        <title>FAM210A is a novel determinant of bone and muscle structure and strength.</title>
        <authorList>
            <person name="Tanaka K.I."/>
            <person name="Xue Y."/>
            <person name="Nguyen-Yamamoto L."/>
            <person name="Morris J.A."/>
            <person name="Kanazawa I."/>
            <person name="Sugimoto T."/>
            <person name="Wing S.S."/>
            <person name="Richards J.B."/>
            <person name="Goltzman D."/>
        </authorList>
    </citation>
    <scope>TISSUE SPECIFICITY</scope>
    <scope>SUBCELLULAR LOCATION</scope>
    <scope>FUNCTION</scope>
    <scope>DISRUPTION PHENOTYPE</scope>
</reference>
<keyword id="KW-0175">Coiled coil</keyword>
<keyword id="KW-0963">Cytoplasm</keyword>
<keyword id="KW-0472">Membrane</keyword>
<keyword id="KW-0496">Mitochondrion</keyword>
<keyword id="KW-1185">Reference proteome</keyword>
<keyword id="KW-0812">Transmembrane</keyword>
<keyword id="KW-1133">Transmembrane helix</keyword>
<comment type="function">
    <text evidence="4">May play a role in the structure and strength of both muscle and bone.</text>
</comment>
<comment type="subunit">
    <text evidence="1">Interacts with ATAD3A.</text>
</comment>
<comment type="subcellular location">
    <subcellularLocation>
        <location evidence="2">Membrane</location>
        <topology evidence="2">Single-pass membrane protein</topology>
    </subcellularLocation>
    <subcellularLocation>
        <location evidence="4">Mitochondrion</location>
    </subcellularLocation>
    <subcellularLocation>
        <location evidence="4">Cytoplasm</location>
    </subcellularLocation>
</comment>
<comment type="tissue specificity">
    <text evidence="4">Expressed in skeletal muscle, heart, brain but not in bone.</text>
</comment>
<comment type="disruption phenotype">
    <text evidence="4 5">Embryonic lethality in homozygotes mice after embryonic day 9.5 (PubMed:29618611). Tamoxifen-inducible Fam210a homozygous knockout mice exhibit decreased grip strength, lean mass of all limbs, bone mineral density, bone biomechanical strength, and elevated osteoclast activity with microarchitectural deterioration of trabecular and cortical bones (PubMed:29618611).</text>
</comment>
<comment type="similarity">
    <text evidence="6">Belongs to the FAM210 family.</text>
</comment>
<feature type="chain" id="PRO_0000274425" description="Protein FAM210A">
    <location>
        <begin position="1"/>
        <end position="273"/>
    </location>
</feature>
<feature type="transmembrane region" description="Helical" evidence="2">
    <location>
        <begin position="138"/>
        <end position="158"/>
    </location>
</feature>
<feature type="domain" description="DUF1279">
    <location>
        <begin position="118"/>
        <end position="230"/>
    </location>
</feature>
<feature type="region of interest" description="Disordered" evidence="3">
    <location>
        <begin position="94"/>
        <end position="116"/>
    </location>
</feature>
<feature type="coiled-coil region" evidence="2">
    <location>
        <begin position="233"/>
        <end position="269"/>
    </location>
</feature>
<feature type="compositionally biased region" description="Basic and acidic residues" evidence="3">
    <location>
        <begin position="106"/>
        <end position="116"/>
    </location>
</feature>
<feature type="sequence conflict" description="In Ref. 1; BAE34986." evidence="6" ref="1">
    <original>L</original>
    <variation>F</variation>
    <location>
        <position position="64"/>
    </location>
</feature>
<proteinExistence type="evidence at protein level"/>
<dbReference type="EMBL" id="AK034980">
    <property type="protein sequence ID" value="BAC28902.1"/>
    <property type="molecule type" value="mRNA"/>
</dbReference>
<dbReference type="EMBL" id="AK044238">
    <property type="protein sequence ID" value="BAC31834.1"/>
    <property type="molecule type" value="mRNA"/>
</dbReference>
<dbReference type="EMBL" id="AK077093">
    <property type="protein sequence ID" value="BAC36609.1"/>
    <property type="molecule type" value="mRNA"/>
</dbReference>
<dbReference type="EMBL" id="AK049567">
    <property type="protein sequence ID" value="BAC33815.1"/>
    <property type="molecule type" value="mRNA"/>
</dbReference>
<dbReference type="EMBL" id="AK147662">
    <property type="protein sequence ID" value="BAE28056.1"/>
    <property type="molecule type" value="mRNA"/>
</dbReference>
<dbReference type="EMBL" id="AK159319">
    <property type="protein sequence ID" value="BAE34986.1"/>
    <property type="molecule type" value="mRNA"/>
</dbReference>
<dbReference type="EMBL" id="AK162396">
    <property type="protein sequence ID" value="BAE36892.1"/>
    <property type="molecule type" value="mRNA"/>
</dbReference>
<dbReference type="EMBL" id="AK079137">
    <property type="protein sequence ID" value="BAC37558.1"/>
    <property type="molecule type" value="mRNA"/>
</dbReference>
<dbReference type="EMBL" id="BC038695">
    <property type="protein sequence ID" value="AAH38695.1"/>
    <property type="molecule type" value="mRNA"/>
</dbReference>
<dbReference type="EMBL" id="BC095936">
    <property type="protein sequence ID" value="AAH95936.1"/>
    <property type="molecule type" value="mRNA"/>
</dbReference>
<dbReference type="CCDS" id="CCDS29326.1"/>
<dbReference type="RefSeq" id="NP_722489.1">
    <property type="nucleotide sequence ID" value="NM_153794.4"/>
</dbReference>
<dbReference type="RefSeq" id="XP_006525587.1">
    <property type="nucleotide sequence ID" value="XM_006525524.5"/>
</dbReference>
<dbReference type="RefSeq" id="XP_030106132.1">
    <property type="nucleotide sequence ID" value="XM_030250272.2"/>
</dbReference>
<dbReference type="SMR" id="Q8BGY7"/>
<dbReference type="BioGRID" id="224356">
    <property type="interactions" value="1"/>
</dbReference>
<dbReference type="FunCoup" id="Q8BGY7">
    <property type="interactions" value="1610"/>
</dbReference>
<dbReference type="STRING" id="10090.ENSMUSP00000045927"/>
<dbReference type="GlyGen" id="Q8BGY7">
    <property type="glycosylation" value="1 site, 1 O-linked glycan (1 site)"/>
</dbReference>
<dbReference type="PhosphoSitePlus" id="Q8BGY7"/>
<dbReference type="jPOST" id="Q8BGY7"/>
<dbReference type="PaxDb" id="10090-ENSMUSP00000045927"/>
<dbReference type="PeptideAtlas" id="Q8BGY7"/>
<dbReference type="ProteomicsDB" id="275825"/>
<dbReference type="Pumba" id="Q8BGY7"/>
<dbReference type="Antibodypedia" id="54115">
    <property type="antibodies" value="14 antibodies from 8 providers"/>
</dbReference>
<dbReference type="Ensembl" id="ENSMUST00000042852.7">
    <property type="protein sequence ID" value="ENSMUSP00000045927.7"/>
    <property type="gene ID" value="ENSMUSG00000038121.7"/>
</dbReference>
<dbReference type="GeneID" id="108654"/>
<dbReference type="KEGG" id="mmu:108654"/>
<dbReference type="UCSC" id="uc008fni.1">
    <property type="organism name" value="mouse"/>
</dbReference>
<dbReference type="AGR" id="MGI:1914000"/>
<dbReference type="CTD" id="125228"/>
<dbReference type="MGI" id="MGI:1914000">
    <property type="gene designation" value="Fam210a"/>
</dbReference>
<dbReference type="VEuPathDB" id="HostDB:ENSMUSG00000038121"/>
<dbReference type="eggNOG" id="KOG4082">
    <property type="taxonomic scope" value="Eukaryota"/>
</dbReference>
<dbReference type="GeneTree" id="ENSGT00940000156554"/>
<dbReference type="HOGENOM" id="CLU_085747_0_0_1"/>
<dbReference type="InParanoid" id="Q8BGY7"/>
<dbReference type="OMA" id="MQWNVLR"/>
<dbReference type="OrthoDB" id="5874039at2759"/>
<dbReference type="PhylomeDB" id="Q8BGY7"/>
<dbReference type="TreeFam" id="TF313283"/>
<dbReference type="BioGRID-ORCS" id="108654">
    <property type="hits" value="21 hits in 79 CRISPR screens"/>
</dbReference>
<dbReference type="ChiTaRS" id="Fam210a">
    <property type="organism name" value="mouse"/>
</dbReference>
<dbReference type="PRO" id="PR:Q8BGY7"/>
<dbReference type="Proteomes" id="UP000000589">
    <property type="component" value="Chromosome 18"/>
</dbReference>
<dbReference type="RNAct" id="Q8BGY7">
    <property type="molecule type" value="protein"/>
</dbReference>
<dbReference type="Bgee" id="ENSMUSG00000038121">
    <property type="expression patterns" value="Expressed in soleus muscle and 227 other cell types or tissues"/>
</dbReference>
<dbReference type="ExpressionAtlas" id="Q8BGY7">
    <property type="expression patterns" value="baseline and differential"/>
</dbReference>
<dbReference type="GO" id="GO:0005737">
    <property type="term" value="C:cytoplasm"/>
    <property type="evidence" value="ECO:0000314"/>
    <property type="project" value="UniProtKB"/>
</dbReference>
<dbReference type="GO" id="GO:0016020">
    <property type="term" value="C:membrane"/>
    <property type="evidence" value="ECO:0007669"/>
    <property type="project" value="UniProtKB-SubCell"/>
</dbReference>
<dbReference type="GO" id="GO:0005739">
    <property type="term" value="C:mitochondrion"/>
    <property type="evidence" value="ECO:0000314"/>
    <property type="project" value="UniProtKB"/>
</dbReference>
<dbReference type="InterPro" id="IPR045866">
    <property type="entry name" value="FAM210A/B-like"/>
</dbReference>
<dbReference type="InterPro" id="IPR009688">
    <property type="entry name" value="FAM210A/B-like_dom"/>
</dbReference>
<dbReference type="PANTHER" id="PTHR21377:SF1">
    <property type="entry name" value="PROTEIN FAM210A"/>
    <property type="match status" value="1"/>
</dbReference>
<dbReference type="PANTHER" id="PTHR21377">
    <property type="entry name" value="PROTEIN FAM210B, MITOCHONDRIAL"/>
    <property type="match status" value="1"/>
</dbReference>
<dbReference type="Pfam" id="PF06916">
    <property type="entry name" value="FAM210A-B_dom"/>
    <property type="match status" value="1"/>
</dbReference>
<organism>
    <name type="scientific">Mus musculus</name>
    <name type="common">Mouse</name>
    <dbReference type="NCBI Taxonomy" id="10090"/>
    <lineage>
        <taxon>Eukaryota</taxon>
        <taxon>Metazoa</taxon>
        <taxon>Chordata</taxon>
        <taxon>Craniata</taxon>
        <taxon>Vertebrata</taxon>
        <taxon>Euteleostomi</taxon>
        <taxon>Mammalia</taxon>
        <taxon>Eutheria</taxon>
        <taxon>Euarchontoglires</taxon>
        <taxon>Glires</taxon>
        <taxon>Rodentia</taxon>
        <taxon>Myomorpha</taxon>
        <taxon>Muroidea</taxon>
        <taxon>Muridae</taxon>
        <taxon>Murinae</taxon>
        <taxon>Mus</taxon>
        <taxon>Mus</taxon>
    </lineage>
</organism>
<accession>Q8BGY7</accession>
<accession>Q3TXD0</accession>
<accession>Q8BNY5</accession>
<protein>
    <recommendedName>
        <fullName>Protein FAM210A</fullName>
    </recommendedName>
</protein>
<gene>
    <name type="primary">Fam210a</name>
</gene>